<feature type="chain" id="PRO_0000094280" description="Elongation factor P">
    <location>
        <begin position="1"/>
        <end position="188"/>
    </location>
</feature>
<feature type="modified residue" description="N6-(3,6-diaminohexanoyl)-5-hydroxylysine" evidence="1">
    <location>
        <position position="34"/>
    </location>
</feature>
<organism>
    <name type="scientific">Methylococcus capsulatus (strain ATCC 33009 / NCIMB 11132 / Bath)</name>
    <dbReference type="NCBI Taxonomy" id="243233"/>
    <lineage>
        <taxon>Bacteria</taxon>
        <taxon>Pseudomonadati</taxon>
        <taxon>Pseudomonadota</taxon>
        <taxon>Gammaproteobacteria</taxon>
        <taxon>Methylococcales</taxon>
        <taxon>Methylococcaceae</taxon>
        <taxon>Methylococcus</taxon>
    </lineage>
</organism>
<accession>Q609B5</accession>
<name>EFP_METCA</name>
<comment type="function">
    <text evidence="1">Involved in peptide bond synthesis. Alleviates ribosome stalling that occurs when 3 or more consecutive Pro residues or the sequence PPG is present in a protein, possibly by augmenting the peptidyl transferase activity of the ribosome. Modification of Lys-34 is required for alleviation.</text>
</comment>
<comment type="pathway">
    <text evidence="1">Protein biosynthesis; polypeptide chain elongation.</text>
</comment>
<comment type="subcellular location">
    <subcellularLocation>
        <location evidence="1">Cytoplasm</location>
    </subcellularLocation>
</comment>
<comment type="PTM">
    <text evidence="1">May be beta-lysylated on the epsilon-amino group of Lys-34 by the combined action of EpmA and EpmB, and then hydroxylated on the C5 position of the same residue by EpmC (if this protein is present). Lysylation is critical for the stimulatory effect of EF-P on peptide-bond formation. The lysylation moiety may extend toward the peptidyltransferase center and stabilize the terminal 3-CCA end of the tRNA. Hydroxylation of the C5 position on Lys-34 may allow additional potential stabilizing hydrogen-bond interactions with the P-tRNA.</text>
</comment>
<comment type="similarity">
    <text evidence="1">Belongs to the elongation factor P family.</text>
</comment>
<proteinExistence type="inferred from homology"/>
<protein>
    <recommendedName>
        <fullName evidence="1">Elongation factor P</fullName>
        <shortName evidence="1">EF-P</shortName>
    </recommendedName>
</protein>
<sequence length="188" mass="20764">MAIVSTSEFKNGLKVMLDGDPCTMLESEFVKPGKGQAFNRVKLRNLKTGRVVERTFKSGETLETADVVDVEMQYLYNDGELWHFMVPESFEQYAADQNAVADAKKWLKEQDICILTLFNNVPLAVQPPNFVELTITETDPGVRGDTSGGGGKPATLETGAVVRVPLFVQTGEVIKVDTRTGEYVSRVK</sequence>
<keyword id="KW-0963">Cytoplasm</keyword>
<keyword id="KW-0251">Elongation factor</keyword>
<keyword id="KW-0379">Hydroxylation</keyword>
<keyword id="KW-0648">Protein biosynthesis</keyword>
<keyword id="KW-1185">Reference proteome</keyword>
<gene>
    <name evidence="1" type="primary">efp</name>
    <name type="ordered locus">MCA1320</name>
</gene>
<dbReference type="EMBL" id="AE017282">
    <property type="protein sequence ID" value="AAU92643.1"/>
    <property type="molecule type" value="Genomic_DNA"/>
</dbReference>
<dbReference type="RefSeq" id="WP_010960601.1">
    <property type="nucleotide sequence ID" value="NC_002977.6"/>
</dbReference>
<dbReference type="SMR" id="Q609B5"/>
<dbReference type="STRING" id="243233.MCA1320"/>
<dbReference type="GeneID" id="88223603"/>
<dbReference type="KEGG" id="mca:MCA1320"/>
<dbReference type="eggNOG" id="COG0231">
    <property type="taxonomic scope" value="Bacteria"/>
</dbReference>
<dbReference type="HOGENOM" id="CLU_074944_0_0_6"/>
<dbReference type="UniPathway" id="UPA00345"/>
<dbReference type="Proteomes" id="UP000006821">
    <property type="component" value="Chromosome"/>
</dbReference>
<dbReference type="GO" id="GO:0005737">
    <property type="term" value="C:cytoplasm"/>
    <property type="evidence" value="ECO:0007669"/>
    <property type="project" value="UniProtKB-SubCell"/>
</dbReference>
<dbReference type="GO" id="GO:0003746">
    <property type="term" value="F:translation elongation factor activity"/>
    <property type="evidence" value="ECO:0007669"/>
    <property type="project" value="UniProtKB-UniRule"/>
</dbReference>
<dbReference type="GO" id="GO:0043043">
    <property type="term" value="P:peptide biosynthetic process"/>
    <property type="evidence" value="ECO:0007669"/>
    <property type="project" value="InterPro"/>
</dbReference>
<dbReference type="CDD" id="cd04470">
    <property type="entry name" value="S1_EF-P_repeat_1"/>
    <property type="match status" value="1"/>
</dbReference>
<dbReference type="CDD" id="cd05794">
    <property type="entry name" value="S1_EF-P_repeat_2"/>
    <property type="match status" value="1"/>
</dbReference>
<dbReference type="FunFam" id="2.30.30.30:FF:000003">
    <property type="entry name" value="Elongation factor P"/>
    <property type="match status" value="1"/>
</dbReference>
<dbReference type="FunFam" id="2.40.50.140:FF:000004">
    <property type="entry name" value="Elongation factor P"/>
    <property type="match status" value="1"/>
</dbReference>
<dbReference type="FunFam" id="2.40.50.140:FF:000009">
    <property type="entry name" value="Elongation factor P"/>
    <property type="match status" value="1"/>
</dbReference>
<dbReference type="Gene3D" id="2.30.30.30">
    <property type="match status" value="1"/>
</dbReference>
<dbReference type="Gene3D" id="2.40.50.140">
    <property type="entry name" value="Nucleic acid-binding proteins"/>
    <property type="match status" value="2"/>
</dbReference>
<dbReference type="HAMAP" id="MF_00141">
    <property type="entry name" value="EF_P"/>
    <property type="match status" value="1"/>
</dbReference>
<dbReference type="InterPro" id="IPR015365">
    <property type="entry name" value="Elong-fact-P_C"/>
</dbReference>
<dbReference type="InterPro" id="IPR012340">
    <property type="entry name" value="NA-bd_OB-fold"/>
</dbReference>
<dbReference type="InterPro" id="IPR014722">
    <property type="entry name" value="Rib_uL2_dom2"/>
</dbReference>
<dbReference type="InterPro" id="IPR020599">
    <property type="entry name" value="Transl_elong_fac_P/YeiP"/>
</dbReference>
<dbReference type="InterPro" id="IPR013185">
    <property type="entry name" value="Transl_elong_KOW-like"/>
</dbReference>
<dbReference type="InterPro" id="IPR001059">
    <property type="entry name" value="Transl_elong_P/YeiP_cen"/>
</dbReference>
<dbReference type="InterPro" id="IPR013852">
    <property type="entry name" value="Transl_elong_P/YeiP_CS"/>
</dbReference>
<dbReference type="InterPro" id="IPR011768">
    <property type="entry name" value="Transl_elongation_fac_P"/>
</dbReference>
<dbReference type="InterPro" id="IPR008991">
    <property type="entry name" value="Translation_prot_SH3-like_sf"/>
</dbReference>
<dbReference type="NCBIfam" id="TIGR00038">
    <property type="entry name" value="efp"/>
    <property type="match status" value="1"/>
</dbReference>
<dbReference type="NCBIfam" id="NF001810">
    <property type="entry name" value="PRK00529.1"/>
    <property type="match status" value="1"/>
</dbReference>
<dbReference type="PANTHER" id="PTHR30053">
    <property type="entry name" value="ELONGATION FACTOR P"/>
    <property type="match status" value="1"/>
</dbReference>
<dbReference type="PANTHER" id="PTHR30053:SF12">
    <property type="entry name" value="ELONGATION FACTOR P (EF-P) FAMILY PROTEIN"/>
    <property type="match status" value="1"/>
</dbReference>
<dbReference type="Pfam" id="PF01132">
    <property type="entry name" value="EFP"/>
    <property type="match status" value="1"/>
</dbReference>
<dbReference type="Pfam" id="PF08207">
    <property type="entry name" value="EFP_N"/>
    <property type="match status" value="1"/>
</dbReference>
<dbReference type="Pfam" id="PF09285">
    <property type="entry name" value="Elong-fact-P_C"/>
    <property type="match status" value="1"/>
</dbReference>
<dbReference type="PIRSF" id="PIRSF005901">
    <property type="entry name" value="EF-P"/>
    <property type="match status" value="1"/>
</dbReference>
<dbReference type="SMART" id="SM01185">
    <property type="entry name" value="EFP"/>
    <property type="match status" value="1"/>
</dbReference>
<dbReference type="SMART" id="SM00841">
    <property type="entry name" value="Elong-fact-P_C"/>
    <property type="match status" value="1"/>
</dbReference>
<dbReference type="SUPFAM" id="SSF50249">
    <property type="entry name" value="Nucleic acid-binding proteins"/>
    <property type="match status" value="2"/>
</dbReference>
<dbReference type="SUPFAM" id="SSF50104">
    <property type="entry name" value="Translation proteins SH3-like domain"/>
    <property type="match status" value="1"/>
</dbReference>
<dbReference type="PROSITE" id="PS01275">
    <property type="entry name" value="EFP"/>
    <property type="match status" value="1"/>
</dbReference>
<evidence type="ECO:0000255" key="1">
    <source>
        <dbReference type="HAMAP-Rule" id="MF_00141"/>
    </source>
</evidence>
<reference key="1">
    <citation type="journal article" date="2004" name="PLoS Biol.">
        <title>Genomic insights into methanotrophy: the complete genome sequence of Methylococcus capsulatus (Bath).</title>
        <authorList>
            <person name="Ward N.L."/>
            <person name="Larsen O."/>
            <person name="Sakwa J."/>
            <person name="Bruseth L."/>
            <person name="Khouri H.M."/>
            <person name="Durkin A.S."/>
            <person name="Dimitrov G."/>
            <person name="Jiang L."/>
            <person name="Scanlan D."/>
            <person name="Kang K.H."/>
            <person name="Lewis M.R."/>
            <person name="Nelson K.E."/>
            <person name="Methe B.A."/>
            <person name="Wu M."/>
            <person name="Heidelberg J.F."/>
            <person name="Paulsen I.T."/>
            <person name="Fouts D.E."/>
            <person name="Ravel J."/>
            <person name="Tettelin H."/>
            <person name="Ren Q."/>
            <person name="Read T.D."/>
            <person name="DeBoy R.T."/>
            <person name="Seshadri R."/>
            <person name="Salzberg S.L."/>
            <person name="Jensen H.B."/>
            <person name="Birkeland N.K."/>
            <person name="Nelson W.C."/>
            <person name="Dodson R.J."/>
            <person name="Grindhaug S.H."/>
            <person name="Holt I.E."/>
            <person name="Eidhammer I."/>
            <person name="Jonasen I."/>
            <person name="Vanaken S."/>
            <person name="Utterback T.R."/>
            <person name="Feldblyum T.V."/>
            <person name="Fraser C.M."/>
            <person name="Lillehaug J.R."/>
            <person name="Eisen J.A."/>
        </authorList>
    </citation>
    <scope>NUCLEOTIDE SEQUENCE [LARGE SCALE GENOMIC DNA]</scope>
    <source>
        <strain>ATCC 33009 / NCIMB 11132 / Bath</strain>
    </source>
</reference>